<organismHost>
    <name type="scientific">Aves</name>
    <dbReference type="NCBI Taxonomy" id="8782"/>
</organismHost>
<organismHost>
    <name type="scientific">Homo sapiens</name>
    <name type="common">Human</name>
    <dbReference type="NCBI Taxonomy" id="9606"/>
</organismHost>
<organismHost>
    <name type="scientific">Sus scrofa</name>
    <name type="common">Pig</name>
    <dbReference type="NCBI Taxonomy" id="9823"/>
</organismHost>
<organism>
    <name type="scientific">Influenza A virus (strain A/USA:Memphis/10/1996 H1N1)</name>
    <dbReference type="NCBI Taxonomy" id="416730"/>
    <lineage>
        <taxon>Viruses</taxon>
        <taxon>Riboviria</taxon>
        <taxon>Orthornavirae</taxon>
        <taxon>Negarnaviricota</taxon>
        <taxon>Polyploviricotina</taxon>
        <taxon>Insthoviricetes</taxon>
        <taxon>Articulavirales</taxon>
        <taxon>Orthomyxoviridae</taxon>
        <taxon>Alphainfluenzavirus</taxon>
        <taxon>Alphainfluenzavirus influenzae</taxon>
        <taxon>Influenza A virus</taxon>
    </lineage>
</organism>
<sequence>MERIKELRNLMSQSRTREILTKTTVDHMAIIKKYTSGRQEKNPSLRMKWMMAMKYPITADKKITEMIPERNEQGQTLWSKVNDAGSDRVMISPLAVTWWNRNGPVASTIHYPKIYKTYFEKVERLKHGTFGPVHFRNQVKIRRRVDINPGHADLSAKEAQDVIMEVVFPNEVGARILTSESQLTITKEKKEELQNCKISPLMVAYMLERELVRKTRFLPVAGGTSSVYIEVLHLTQGTCWEQMYTPGGEVRNDDVDQSLIIAARNIVRRAAVSADPLASLLEMCHSTQIGGTRMVDILRQNPTEEQAVDICKAAMGLRISSSFSFGGFTFKRTSGSSVKREEEVLTGNLQTLKLNVHEGYEEFTMVGKRATAILRKATRRLIQLIVSGRDEQSIVEAIVVAMVFSQEDCMIKAVRGDLNFVNRANQRLNPMHQLLRHFQKDAKVLFQNWGIEPIDNVMGMIGILPDMTPSTEMSMRGVRVSKMGVDEYSNAERVVVSIDRFLRVRDQRGNVLLSPEEVSETQGTEKLTITYSSSMMWEINGPESVLINTYQWIIRNWETVKIQWSQNPTMLYNKMEFEPFQSLVPKAIRGQYSGFVRTLFQQMRDVLGTFDTIQIIKLLPFAAAPPKQSRMQFSSLTVNVRGSGMRILVRGNSPVFNYNKTTKRLTVLGKDAGTLTEDPDEGTAGVESAVLRGFLILGKEDRRYGPALSINELSNLAKGEKANVLIGQGDVVLVMKRKRDSSILTDSQTATKRIRMAIN</sequence>
<accession>A3DRQ0</accession>
<dbReference type="EMBL" id="CY019802">
    <property type="protein sequence ID" value="ABN50972.1"/>
    <property type="molecule type" value="Viral_cRNA"/>
</dbReference>
<dbReference type="BMRB" id="A3DRQ0"/>
<dbReference type="SMR" id="A3DRQ0"/>
<dbReference type="PRO" id="PR:A3DRQ0"/>
<dbReference type="Proteomes" id="UP000007557">
    <property type="component" value="Genome"/>
</dbReference>
<dbReference type="GO" id="GO:0033650">
    <property type="term" value="C:host cell mitochondrion"/>
    <property type="evidence" value="ECO:0007669"/>
    <property type="project" value="UniProtKB-SubCell"/>
</dbReference>
<dbReference type="GO" id="GO:0042025">
    <property type="term" value="C:host cell nucleus"/>
    <property type="evidence" value="ECO:0007669"/>
    <property type="project" value="UniProtKB-SubCell"/>
</dbReference>
<dbReference type="GO" id="GO:0044423">
    <property type="term" value="C:virion component"/>
    <property type="evidence" value="ECO:0007669"/>
    <property type="project" value="UniProtKB-UniRule"/>
</dbReference>
<dbReference type="GO" id="GO:0003723">
    <property type="term" value="F:RNA binding"/>
    <property type="evidence" value="ECO:0007669"/>
    <property type="project" value="UniProtKB-UniRule"/>
</dbReference>
<dbReference type="GO" id="GO:0003968">
    <property type="term" value="F:RNA-directed RNA polymerase activity"/>
    <property type="evidence" value="ECO:0007669"/>
    <property type="project" value="UniProtKB-UniRule"/>
</dbReference>
<dbReference type="GO" id="GO:0006370">
    <property type="term" value="P:7-methylguanosine mRNA capping"/>
    <property type="evidence" value="ECO:0007669"/>
    <property type="project" value="UniProtKB-UniRule"/>
</dbReference>
<dbReference type="GO" id="GO:0075526">
    <property type="term" value="P:cap snatching"/>
    <property type="evidence" value="ECO:0007669"/>
    <property type="project" value="UniProtKB-UniRule"/>
</dbReference>
<dbReference type="GO" id="GO:0006351">
    <property type="term" value="P:DNA-templated transcription"/>
    <property type="evidence" value="ECO:0007669"/>
    <property type="project" value="UniProtKB-UniRule"/>
</dbReference>
<dbReference type="GO" id="GO:0039545">
    <property type="term" value="P:symbiont-mediated suppression of host cytoplasmic pattern recognition receptor signaling pathway via inhibition of MAVS activity"/>
    <property type="evidence" value="ECO:0007669"/>
    <property type="project" value="UniProtKB-UniRule"/>
</dbReference>
<dbReference type="GO" id="GO:0039657">
    <property type="term" value="P:symbiont-mediated suppression of host gene expression"/>
    <property type="evidence" value="ECO:0007669"/>
    <property type="project" value="UniProtKB-KW"/>
</dbReference>
<dbReference type="GO" id="GO:0039523">
    <property type="term" value="P:symbiont-mediated suppression of host mRNA transcription via inhibition of RNA polymerase II activity"/>
    <property type="evidence" value="ECO:0007669"/>
    <property type="project" value="UniProtKB-UniRule"/>
</dbReference>
<dbReference type="GO" id="GO:0039694">
    <property type="term" value="P:viral RNA genome replication"/>
    <property type="evidence" value="ECO:0007669"/>
    <property type="project" value="InterPro"/>
</dbReference>
<dbReference type="FunFam" id="3.30.30.90:FF:000001">
    <property type="entry name" value="Polymerase basic protein 2"/>
    <property type="match status" value="1"/>
</dbReference>
<dbReference type="Gene3D" id="3.30.30.90">
    <property type="entry name" value="Polymerase Basic Protein 2, C-terminal domain"/>
    <property type="match status" value="1"/>
</dbReference>
<dbReference type="HAMAP" id="MF_04062">
    <property type="entry name" value="INV_PB2"/>
    <property type="match status" value="1"/>
</dbReference>
<dbReference type="InterPro" id="IPR049110">
    <property type="entry name" value="Flu_PB2_2nd"/>
</dbReference>
<dbReference type="InterPro" id="IPR049114">
    <property type="entry name" value="Flu_PB2_6th"/>
</dbReference>
<dbReference type="InterPro" id="IPR049115">
    <property type="entry name" value="Flu_PB2_C"/>
</dbReference>
<dbReference type="InterPro" id="IPR048298">
    <property type="entry name" value="Flu_PB2_CAP-bd"/>
</dbReference>
<dbReference type="InterPro" id="IPR049111">
    <property type="entry name" value="Flu_PB2_middle"/>
</dbReference>
<dbReference type="InterPro" id="IPR049106">
    <property type="entry name" value="Flu_PB2_N"/>
</dbReference>
<dbReference type="InterPro" id="IPR001591">
    <property type="entry name" value="INV_PB2"/>
</dbReference>
<dbReference type="InterPro" id="IPR049113">
    <property type="entry name" value="PB2_helical"/>
</dbReference>
<dbReference type="InterPro" id="IPR037258">
    <property type="entry name" value="PDB2_C"/>
</dbReference>
<dbReference type="Pfam" id="PF20947">
    <property type="entry name" value="Flu_PB2_1st"/>
    <property type="match status" value="1"/>
</dbReference>
<dbReference type="Pfam" id="PF20948">
    <property type="entry name" value="Flu_PB2_2nd"/>
    <property type="match status" value="1"/>
</dbReference>
<dbReference type="Pfam" id="PF20949">
    <property type="entry name" value="Flu_PB2_3rd"/>
    <property type="match status" value="1"/>
</dbReference>
<dbReference type="Pfam" id="PF20950">
    <property type="entry name" value="Flu_PB2_4th"/>
    <property type="match status" value="1"/>
</dbReference>
<dbReference type="Pfam" id="PF00604">
    <property type="entry name" value="Flu_PB2_5th"/>
    <property type="match status" value="1"/>
</dbReference>
<dbReference type="Pfam" id="PF20951">
    <property type="entry name" value="Flu_PB2_6th"/>
    <property type="match status" value="1"/>
</dbReference>
<dbReference type="Pfam" id="PF20952">
    <property type="entry name" value="Flu_PB2_7th"/>
    <property type="match status" value="1"/>
</dbReference>
<dbReference type="SUPFAM" id="SSF160453">
    <property type="entry name" value="PB2 C-terminal domain-like"/>
    <property type="match status" value="1"/>
</dbReference>
<evidence type="ECO:0000255" key="1">
    <source>
        <dbReference type="HAMAP-Rule" id="MF_04062"/>
    </source>
</evidence>
<reference key="1">
    <citation type="submission" date="2007-02" db="EMBL/GenBank/DDBJ databases">
        <title>The NIAID influenza genome sequencing project.</title>
        <authorList>
            <person name="Ghedin E."/>
            <person name="Spiro D."/>
            <person name="Miller N."/>
            <person name="Zaborsky J."/>
            <person name="Feldblyum T."/>
            <person name="Subbu V."/>
            <person name="Shumway M."/>
            <person name="Sparenborg J."/>
            <person name="Groveman L."/>
            <person name="Halpin R."/>
            <person name="Sitz J."/>
            <person name="Koo H."/>
            <person name="Salzberg S.L."/>
            <person name="Webster R.G."/>
            <person name="Hoffmann E."/>
            <person name="Krauss S."/>
            <person name="Naeve C."/>
            <person name="Bao Y."/>
            <person name="Bolotov P."/>
            <person name="Dernovoy D."/>
            <person name="Kiryutin B."/>
            <person name="Lipman D.J."/>
            <person name="Tatusova T."/>
        </authorList>
    </citation>
    <scope>NUCLEOTIDE SEQUENCE [GENOMIC RNA]</scope>
</reference>
<reference key="2">
    <citation type="submission" date="2007-02" db="EMBL/GenBank/DDBJ databases">
        <authorList>
            <consortium name="The NIAID Influenza Genome Sequencing Consortium"/>
        </authorList>
    </citation>
    <scope>NUCLEOTIDE SEQUENCE [GENOMIC RNA]</scope>
</reference>
<feature type="chain" id="PRO_0000373041" description="Polymerase basic protein 2">
    <location>
        <begin position="1"/>
        <end position="759"/>
    </location>
</feature>
<feature type="short sequence motif" description="Nuclear localization signal" evidence="1">
    <location>
        <begin position="736"/>
        <end position="739"/>
    </location>
</feature>
<feature type="site" description="Mammalian adaptation" evidence="1">
    <location>
        <position position="627"/>
    </location>
</feature>
<proteinExistence type="inferred from homology"/>
<name>PB2_I96A2</name>
<comment type="function">
    <text evidence="1">Plays an essential role in transcription initiation and cap-stealing mechanism, in which cellular capped pre-mRNAs are used to generate primers for viral transcription. Recognizes and binds the 7-methylguanosine-containing cap of the target pre-RNA which is subsequently cleaved after 10-13 nucleotides by the viral protein PA. Plays a role in the initiation of the viral genome replication and modulates the activity of the ribonucleoprotein (RNP) complex. In addition, participates in the inhibition of type I interferon induction through interaction with and inhibition of the host mitochondrial antiviral signaling protein MAVS.</text>
</comment>
<comment type="subunit">
    <text evidence="1">Influenza RNA polymerase is composed of three subunits: PB1, PB2 and PA. Interacts (via N-terminus) with PB1 (via C-terminus). Interacts with nucleoprotein NP (via N-terminus). Interacts (via N-terminus) with host MAVS (via N-terminus); this interaction inhibits host innate immune response.</text>
</comment>
<comment type="subcellular location">
    <subcellularLocation>
        <location evidence="1">Virion</location>
    </subcellularLocation>
    <subcellularLocation>
        <location evidence="1">Host nucleus</location>
    </subcellularLocation>
    <subcellularLocation>
        <location evidence="1">Host mitochondrion</location>
    </subcellularLocation>
</comment>
<comment type="similarity">
    <text evidence="1">Belongs to the influenza viruses PB2 family.</text>
</comment>
<protein>
    <recommendedName>
        <fullName evidence="1">Polymerase basic protein 2</fullName>
    </recommendedName>
    <alternativeName>
        <fullName evidence="1">RNA-directed RNA polymerase subunit P3</fullName>
    </alternativeName>
</protein>
<keyword id="KW-1157">Cap snatching</keyword>
<keyword id="KW-1262">Eukaryotic host gene expression shutoff by virus</keyword>
<keyword id="KW-1191">Eukaryotic host transcription shutoff by virus</keyword>
<keyword id="KW-1190">Host gene expression shutoff by virus</keyword>
<keyword id="KW-1045">Host mitochondrion</keyword>
<keyword id="KW-1048">Host nucleus</keyword>
<keyword id="KW-0945">Host-virus interaction</keyword>
<keyword id="KW-1090">Inhibition of host innate immune response by virus</keyword>
<keyword id="KW-1097">Inhibition of host MAVS by virus</keyword>
<keyword id="KW-1113">Inhibition of host RLR pathway by virus</keyword>
<keyword id="KW-1104">Inhibition of host RNA polymerase II by virus</keyword>
<keyword id="KW-0506">mRNA capping</keyword>
<keyword id="KW-0507">mRNA processing</keyword>
<keyword id="KW-0899">Viral immunoevasion</keyword>
<keyword id="KW-1195">Viral transcription</keyword>
<keyword id="KW-0946">Virion</keyword>
<gene>
    <name evidence="1" type="primary">PB2</name>
</gene>